<dbReference type="EMBL" id="AK054567">
    <property type="protein sequence ID" value="BAB70760.1"/>
    <property type="status" value="ALT_SEQ"/>
    <property type="molecule type" value="mRNA"/>
</dbReference>
<dbReference type="EMBL" id="AK292192">
    <property type="protein sequence ID" value="BAF84881.1"/>
    <property type="molecule type" value="mRNA"/>
</dbReference>
<dbReference type="EMBL" id="AK299308">
    <property type="protein sequence ID" value="BAH12996.1"/>
    <property type="molecule type" value="mRNA"/>
</dbReference>
<dbReference type="EMBL" id="AB209546">
    <property type="protein sequence ID" value="BAD92783.1"/>
    <property type="status" value="ALT_INIT"/>
    <property type="molecule type" value="mRNA"/>
</dbReference>
<dbReference type="EMBL" id="AC002310">
    <property type="status" value="NOT_ANNOTATED_CDS"/>
    <property type="molecule type" value="Genomic_DNA"/>
</dbReference>
<dbReference type="EMBL" id="CH471192">
    <property type="protein sequence ID" value="EAW52239.1"/>
    <property type="molecule type" value="Genomic_DNA"/>
</dbReference>
<dbReference type="EMBL" id="BC001361">
    <property type="protein sequence ID" value="AAH01361.1"/>
    <property type="molecule type" value="mRNA"/>
</dbReference>
<dbReference type="CCDS" id="CCDS10682.1">
    <molecule id="Q9BV97-1"/>
</dbReference>
<dbReference type="CCDS" id="CCDS76855.1">
    <molecule id="Q9BV97-2"/>
</dbReference>
<dbReference type="CCDS" id="CCDS76856.1">
    <molecule id="Q9BV97-3"/>
</dbReference>
<dbReference type="RefSeq" id="NP_001291947.1">
    <property type="nucleotide sequence ID" value="NM_001305018.1"/>
</dbReference>
<dbReference type="RefSeq" id="NP_001291948.1">
    <molecule id="Q9BV97-3"/>
    <property type="nucleotide sequence ID" value="NM_001305019.2"/>
</dbReference>
<dbReference type="RefSeq" id="NP_001291949.1">
    <molecule id="Q9BV97-2"/>
    <property type="nucleotide sequence ID" value="NM_001305020.2"/>
</dbReference>
<dbReference type="RefSeq" id="NP_076420.1">
    <molecule id="Q9BV97-1"/>
    <property type="nucleotide sequence ID" value="NM_023931.4"/>
</dbReference>
<dbReference type="SMR" id="Q9BV97"/>
<dbReference type="BioGRID" id="122437">
    <property type="interactions" value="43"/>
</dbReference>
<dbReference type="FunCoup" id="Q9BV97">
    <property type="interactions" value="261"/>
</dbReference>
<dbReference type="IntAct" id="Q9BV97">
    <property type="interactions" value="36"/>
</dbReference>
<dbReference type="MINT" id="Q9BV97"/>
<dbReference type="STRING" id="9606.ENSP00000457274"/>
<dbReference type="iPTMnet" id="Q9BV97"/>
<dbReference type="PhosphoSitePlus" id="Q9BV97"/>
<dbReference type="BioMuta" id="ZNF747"/>
<dbReference type="DMDM" id="74733300"/>
<dbReference type="MassIVE" id="Q9BV97"/>
<dbReference type="PaxDb" id="9606-ENSP00000455659"/>
<dbReference type="PeptideAtlas" id="Q9BV97"/>
<dbReference type="ProteomicsDB" id="6711"/>
<dbReference type="ProteomicsDB" id="79186">
    <molecule id="Q9BV97-1"/>
</dbReference>
<dbReference type="ProteomicsDB" id="79187">
    <molecule id="Q9BV97-2"/>
</dbReference>
<dbReference type="Antibodypedia" id="27341">
    <property type="antibodies" value="74 antibodies from 15 providers"/>
</dbReference>
<dbReference type="DNASU" id="65988"/>
<dbReference type="Ensembl" id="ENST00000252799.3">
    <molecule id="Q9BV97-1"/>
    <property type="protein sequence ID" value="ENSP00000252799.3"/>
    <property type="gene ID" value="ENSG00000169955.8"/>
</dbReference>
<dbReference type="Ensembl" id="ENST00000395094.3">
    <molecule id="Q9BV97-2"/>
    <property type="protein sequence ID" value="ENSP00000378528.3"/>
    <property type="gene ID" value="ENSG00000169955.8"/>
</dbReference>
<dbReference type="Ensembl" id="ENST00000568028.1">
    <molecule id="Q9BV97-3"/>
    <property type="protein sequence ID" value="ENSP00000457274.1"/>
    <property type="gene ID" value="ENSG00000169955.8"/>
</dbReference>
<dbReference type="GeneID" id="65988"/>
<dbReference type="KEGG" id="hsa:65988"/>
<dbReference type="UCSC" id="uc002dyn.4">
    <molecule id="Q9BV97-3"/>
    <property type="organism name" value="human"/>
</dbReference>
<dbReference type="UCSC" id="uc059tfh.1">
    <property type="organism name" value="human"/>
</dbReference>
<dbReference type="AGR" id="HGNC:28350"/>
<dbReference type="CTD" id="65988"/>
<dbReference type="DisGeNET" id="65988"/>
<dbReference type="GeneCards" id="ZNF747"/>
<dbReference type="HGNC" id="HGNC:28350">
    <property type="gene designation" value="ZNF747"/>
</dbReference>
<dbReference type="HPA" id="ENSG00000169955">
    <property type="expression patterns" value="Low tissue specificity"/>
</dbReference>
<dbReference type="neXtProt" id="NX_Q9BV97"/>
<dbReference type="OpenTargets" id="ENSG00000169955"/>
<dbReference type="PharmGKB" id="PA144596521"/>
<dbReference type="VEuPathDB" id="HostDB:ENSG00000169955"/>
<dbReference type="VEuPathDB" id="HostDB:ENSG00000261459"/>
<dbReference type="eggNOG" id="KOG1721">
    <property type="taxonomic scope" value="Eukaryota"/>
</dbReference>
<dbReference type="GeneTree" id="ENSGT00940000160032"/>
<dbReference type="HOGENOM" id="CLU_002678_13_2_1"/>
<dbReference type="InParanoid" id="Q9BV97"/>
<dbReference type="OMA" id="NRAGPEC"/>
<dbReference type="OrthoDB" id="6077919at2759"/>
<dbReference type="PAN-GO" id="Q9BV97">
    <property type="GO annotations" value="0 GO annotations based on evolutionary models"/>
</dbReference>
<dbReference type="PhylomeDB" id="Q9BV97"/>
<dbReference type="TreeFam" id="TF337922"/>
<dbReference type="TreeFam" id="TF341914"/>
<dbReference type="PathwayCommons" id="Q9BV97"/>
<dbReference type="Reactome" id="R-HSA-212436">
    <property type="pathway name" value="Generic Transcription Pathway"/>
</dbReference>
<dbReference type="SignaLink" id="Q9BV97"/>
<dbReference type="BioGRID-ORCS" id="65988">
    <property type="hits" value="18 hits in 1161 CRISPR screens"/>
</dbReference>
<dbReference type="GenomeRNAi" id="65988"/>
<dbReference type="Pharos" id="Q9BV97">
    <property type="development level" value="Tdark"/>
</dbReference>
<dbReference type="PRO" id="PR:Q9BV97"/>
<dbReference type="Proteomes" id="UP000005640">
    <property type="component" value="Chromosome 16"/>
</dbReference>
<dbReference type="RNAct" id="Q9BV97">
    <property type="molecule type" value="protein"/>
</dbReference>
<dbReference type="Bgee" id="ENSG00000169955">
    <property type="expression patterns" value="Expressed in olfactory bulb and 172 other cell types or tissues"/>
</dbReference>
<dbReference type="ExpressionAtlas" id="Q9BV97">
    <property type="expression patterns" value="baseline and differential"/>
</dbReference>
<dbReference type="GO" id="GO:0008270">
    <property type="term" value="F:zinc ion binding"/>
    <property type="evidence" value="ECO:0007669"/>
    <property type="project" value="UniProtKB-KW"/>
</dbReference>
<dbReference type="GO" id="GO:0006355">
    <property type="term" value="P:regulation of DNA-templated transcription"/>
    <property type="evidence" value="ECO:0007669"/>
    <property type="project" value="InterPro"/>
</dbReference>
<dbReference type="CDD" id="cd07765">
    <property type="entry name" value="KRAB_A-box"/>
    <property type="match status" value="1"/>
</dbReference>
<dbReference type="FunFam" id="3.30.160.60:FF:001119">
    <property type="entry name" value="zinc finger protein 408"/>
    <property type="match status" value="1"/>
</dbReference>
<dbReference type="FunFam" id="3.30.160.60:FF:000180">
    <property type="entry name" value="Zinc finger protein 689"/>
    <property type="match status" value="1"/>
</dbReference>
<dbReference type="FunFam" id="3.30.160.60:FF:002226">
    <property type="entry name" value="Zinc finger protein 764"/>
    <property type="match status" value="1"/>
</dbReference>
<dbReference type="Gene3D" id="6.10.140.140">
    <property type="match status" value="1"/>
</dbReference>
<dbReference type="Gene3D" id="3.30.160.60">
    <property type="entry name" value="Classic Zinc Finger"/>
    <property type="match status" value="4"/>
</dbReference>
<dbReference type="InterPro" id="IPR001909">
    <property type="entry name" value="KRAB"/>
</dbReference>
<dbReference type="InterPro" id="IPR036051">
    <property type="entry name" value="KRAB_dom_sf"/>
</dbReference>
<dbReference type="InterPro" id="IPR036236">
    <property type="entry name" value="Znf_C2H2_sf"/>
</dbReference>
<dbReference type="InterPro" id="IPR013087">
    <property type="entry name" value="Znf_C2H2_type"/>
</dbReference>
<dbReference type="PANTHER" id="PTHR24381">
    <property type="entry name" value="ZINC FINGER PROTEIN"/>
    <property type="match status" value="1"/>
</dbReference>
<dbReference type="PANTHER" id="PTHR24381:SF451">
    <property type="entry name" value="ZINC FINGER PROTEIN 747"/>
    <property type="match status" value="1"/>
</dbReference>
<dbReference type="Pfam" id="PF01352">
    <property type="entry name" value="KRAB"/>
    <property type="match status" value="1"/>
</dbReference>
<dbReference type="Pfam" id="PF00096">
    <property type="entry name" value="zf-C2H2"/>
    <property type="match status" value="2"/>
</dbReference>
<dbReference type="SMART" id="SM00349">
    <property type="entry name" value="KRAB"/>
    <property type="match status" value="1"/>
</dbReference>
<dbReference type="SMART" id="SM00355">
    <property type="entry name" value="ZnF_C2H2"/>
    <property type="match status" value="4"/>
</dbReference>
<dbReference type="SUPFAM" id="SSF57667">
    <property type="entry name" value="beta-beta-alpha zinc fingers"/>
    <property type="match status" value="2"/>
</dbReference>
<dbReference type="SUPFAM" id="SSF109640">
    <property type="entry name" value="KRAB domain (Kruppel-associated box)"/>
    <property type="match status" value="1"/>
</dbReference>
<dbReference type="PROSITE" id="PS50805">
    <property type="entry name" value="KRAB"/>
    <property type="match status" value="1"/>
</dbReference>
<dbReference type="PROSITE" id="PS00028">
    <property type="entry name" value="ZINC_FINGER_C2H2_1"/>
    <property type="match status" value="4"/>
</dbReference>
<dbReference type="PROSITE" id="PS50157">
    <property type="entry name" value="ZINC_FINGER_C2H2_2"/>
    <property type="match status" value="4"/>
</dbReference>
<keyword id="KW-0025">Alternative splicing</keyword>
<keyword id="KW-0479">Metal-binding</keyword>
<keyword id="KW-1267">Proteomics identification</keyword>
<keyword id="KW-1185">Reference proteome</keyword>
<keyword id="KW-0677">Repeat</keyword>
<keyword id="KW-0862">Zinc</keyword>
<keyword id="KW-0863">Zinc-finger</keyword>
<reference key="1">
    <citation type="journal article" date="2004" name="Nat. Genet.">
        <title>Complete sequencing and characterization of 21,243 full-length human cDNAs.</title>
        <authorList>
            <person name="Ota T."/>
            <person name="Suzuki Y."/>
            <person name="Nishikawa T."/>
            <person name="Otsuki T."/>
            <person name="Sugiyama T."/>
            <person name="Irie R."/>
            <person name="Wakamatsu A."/>
            <person name="Hayashi K."/>
            <person name="Sato H."/>
            <person name="Nagai K."/>
            <person name="Kimura K."/>
            <person name="Makita H."/>
            <person name="Sekine M."/>
            <person name="Obayashi M."/>
            <person name="Nishi T."/>
            <person name="Shibahara T."/>
            <person name="Tanaka T."/>
            <person name="Ishii S."/>
            <person name="Yamamoto J."/>
            <person name="Saito K."/>
            <person name="Kawai Y."/>
            <person name="Isono Y."/>
            <person name="Nakamura Y."/>
            <person name="Nagahari K."/>
            <person name="Murakami K."/>
            <person name="Yasuda T."/>
            <person name="Iwayanagi T."/>
            <person name="Wagatsuma M."/>
            <person name="Shiratori A."/>
            <person name="Sudo H."/>
            <person name="Hosoiri T."/>
            <person name="Kaku Y."/>
            <person name="Kodaira H."/>
            <person name="Kondo H."/>
            <person name="Sugawara M."/>
            <person name="Takahashi M."/>
            <person name="Kanda K."/>
            <person name="Yokoi T."/>
            <person name="Furuya T."/>
            <person name="Kikkawa E."/>
            <person name="Omura Y."/>
            <person name="Abe K."/>
            <person name="Kamihara K."/>
            <person name="Katsuta N."/>
            <person name="Sato K."/>
            <person name="Tanikawa M."/>
            <person name="Yamazaki M."/>
            <person name="Ninomiya K."/>
            <person name="Ishibashi T."/>
            <person name="Yamashita H."/>
            <person name="Murakawa K."/>
            <person name="Fujimori K."/>
            <person name="Tanai H."/>
            <person name="Kimata M."/>
            <person name="Watanabe M."/>
            <person name="Hiraoka S."/>
            <person name="Chiba Y."/>
            <person name="Ishida S."/>
            <person name="Ono Y."/>
            <person name="Takiguchi S."/>
            <person name="Watanabe S."/>
            <person name="Yosida M."/>
            <person name="Hotuta T."/>
            <person name="Kusano J."/>
            <person name="Kanehori K."/>
            <person name="Takahashi-Fujii A."/>
            <person name="Hara H."/>
            <person name="Tanase T.-O."/>
            <person name="Nomura Y."/>
            <person name="Togiya S."/>
            <person name="Komai F."/>
            <person name="Hara R."/>
            <person name="Takeuchi K."/>
            <person name="Arita M."/>
            <person name="Imose N."/>
            <person name="Musashino K."/>
            <person name="Yuuki H."/>
            <person name="Oshima A."/>
            <person name="Sasaki N."/>
            <person name="Aotsuka S."/>
            <person name="Yoshikawa Y."/>
            <person name="Matsunawa H."/>
            <person name="Ichihara T."/>
            <person name="Shiohata N."/>
            <person name="Sano S."/>
            <person name="Moriya S."/>
            <person name="Momiyama H."/>
            <person name="Satoh N."/>
            <person name="Takami S."/>
            <person name="Terashima Y."/>
            <person name="Suzuki O."/>
            <person name="Nakagawa S."/>
            <person name="Senoh A."/>
            <person name="Mizoguchi H."/>
            <person name="Goto Y."/>
            <person name="Shimizu F."/>
            <person name="Wakebe H."/>
            <person name="Hishigaki H."/>
            <person name="Watanabe T."/>
            <person name="Sugiyama A."/>
            <person name="Takemoto M."/>
            <person name="Kawakami B."/>
            <person name="Yamazaki M."/>
            <person name="Watanabe K."/>
            <person name="Kumagai A."/>
            <person name="Itakura S."/>
            <person name="Fukuzumi Y."/>
            <person name="Fujimori Y."/>
            <person name="Komiyama M."/>
            <person name="Tashiro H."/>
            <person name="Tanigami A."/>
            <person name="Fujiwara T."/>
            <person name="Ono T."/>
            <person name="Yamada K."/>
            <person name="Fujii Y."/>
            <person name="Ozaki K."/>
            <person name="Hirao M."/>
            <person name="Ohmori Y."/>
            <person name="Kawabata A."/>
            <person name="Hikiji T."/>
            <person name="Kobatake N."/>
            <person name="Inagaki H."/>
            <person name="Ikema Y."/>
            <person name="Okamoto S."/>
            <person name="Okitani R."/>
            <person name="Kawakami T."/>
            <person name="Noguchi S."/>
            <person name="Itoh T."/>
            <person name="Shigeta K."/>
            <person name="Senba T."/>
            <person name="Matsumura K."/>
            <person name="Nakajima Y."/>
            <person name="Mizuno T."/>
            <person name="Morinaga M."/>
            <person name="Sasaki M."/>
            <person name="Togashi T."/>
            <person name="Oyama M."/>
            <person name="Hata H."/>
            <person name="Watanabe M."/>
            <person name="Komatsu T."/>
            <person name="Mizushima-Sugano J."/>
            <person name="Satoh T."/>
            <person name="Shirai Y."/>
            <person name="Takahashi Y."/>
            <person name="Nakagawa K."/>
            <person name="Okumura K."/>
            <person name="Nagase T."/>
            <person name="Nomura N."/>
            <person name="Kikuchi H."/>
            <person name="Masuho Y."/>
            <person name="Yamashita R."/>
            <person name="Nakai K."/>
            <person name="Yada T."/>
            <person name="Nakamura Y."/>
            <person name="Ohara O."/>
            <person name="Isogai T."/>
            <person name="Sugano S."/>
        </authorList>
    </citation>
    <scope>NUCLEOTIDE SEQUENCE [LARGE SCALE MRNA] (ISOFORMS 1; 2 AND 3)</scope>
    <source>
        <tissue>Cervix</tissue>
        <tissue>Neuroblastoma</tissue>
    </source>
</reference>
<reference key="2">
    <citation type="submission" date="2005-03" db="EMBL/GenBank/DDBJ databases">
        <authorList>
            <person name="Totoki Y."/>
            <person name="Toyoda A."/>
            <person name="Takeda T."/>
            <person name="Sakaki Y."/>
            <person name="Tanaka A."/>
            <person name="Yokoyama S."/>
            <person name="Ohara O."/>
            <person name="Nagase T."/>
            <person name="Kikuno R.F."/>
        </authorList>
    </citation>
    <scope>NUCLEOTIDE SEQUENCE [LARGE SCALE MRNA] (ISOFORM 2)</scope>
    <source>
        <tissue>Brain</tissue>
    </source>
</reference>
<reference key="3">
    <citation type="journal article" date="2004" name="Nature">
        <title>The sequence and analysis of duplication-rich human chromosome 16.</title>
        <authorList>
            <person name="Martin J."/>
            <person name="Han C."/>
            <person name="Gordon L.A."/>
            <person name="Terry A."/>
            <person name="Prabhakar S."/>
            <person name="She X."/>
            <person name="Xie G."/>
            <person name="Hellsten U."/>
            <person name="Chan Y.M."/>
            <person name="Altherr M."/>
            <person name="Couronne O."/>
            <person name="Aerts A."/>
            <person name="Bajorek E."/>
            <person name="Black S."/>
            <person name="Blumer H."/>
            <person name="Branscomb E."/>
            <person name="Brown N.C."/>
            <person name="Bruno W.J."/>
            <person name="Buckingham J.M."/>
            <person name="Callen D.F."/>
            <person name="Campbell C.S."/>
            <person name="Campbell M.L."/>
            <person name="Campbell E.W."/>
            <person name="Caoile C."/>
            <person name="Challacombe J.F."/>
            <person name="Chasteen L.A."/>
            <person name="Chertkov O."/>
            <person name="Chi H.C."/>
            <person name="Christensen M."/>
            <person name="Clark L.M."/>
            <person name="Cohn J.D."/>
            <person name="Denys M."/>
            <person name="Detter J.C."/>
            <person name="Dickson M."/>
            <person name="Dimitrijevic-Bussod M."/>
            <person name="Escobar J."/>
            <person name="Fawcett J.J."/>
            <person name="Flowers D."/>
            <person name="Fotopulos D."/>
            <person name="Glavina T."/>
            <person name="Gomez M."/>
            <person name="Gonzales E."/>
            <person name="Goodstein D."/>
            <person name="Goodwin L.A."/>
            <person name="Grady D.L."/>
            <person name="Grigoriev I."/>
            <person name="Groza M."/>
            <person name="Hammon N."/>
            <person name="Hawkins T."/>
            <person name="Haydu L."/>
            <person name="Hildebrand C.E."/>
            <person name="Huang W."/>
            <person name="Israni S."/>
            <person name="Jett J."/>
            <person name="Jewett P.B."/>
            <person name="Kadner K."/>
            <person name="Kimball H."/>
            <person name="Kobayashi A."/>
            <person name="Krawczyk M.-C."/>
            <person name="Leyba T."/>
            <person name="Longmire J.L."/>
            <person name="Lopez F."/>
            <person name="Lou Y."/>
            <person name="Lowry S."/>
            <person name="Ludeman T."/>
            <person name="Manohar C.F."/>
            <person name="Mark G.A."/>
            <person name="McMurray K.L."/>
            <person name="Meincke L.J."/>
            <person name="Morgan J."/>
            <person name="Moyzis R.K."/>
            <person name="Mundt M.O."/>
            <person name="Munk A.C."/>
            <person name="Nandkeshwar R.D."/>
            <person name="Pitluck S."/>
            <person name="Pollard M."/>
            <person name="Predki P."/>
            <person name="Parson-Quintana B."/>
            <person name="Ramirez L."/>
            <person name="Rash S."/>
            <person name="Retterer J."/>
            <person name="Ricke D.O."/>
            <person name="Robinson D.L."/>
            <person name="Rodriguez A."/>
            <person name="Salamov A."/>
            <person name="Saunders E.H."/>
            <person name="Scott D."/>
            <person name="Shough T."/>
            <person name="Stallings R.L."/>
            <person name="Stalvey M."/>
            <person name="Sutherland R.D."/>
            <person name="Tapia R."/>
            <person name="Tesmer J.G."/>
            <person name="Thayer N."/>
            <person name="Thompson L.S."/>
            <person name="Tice H."/>
            <person name="Torney D.C."/>
            <person name="Tran-Gyamfi M."/>
            <person name="Tsai M."/>
            <person name="Ulanovsky L.E."/>
            <person name="Ustaszewska A."/>
            <person name="Vo N."/>
            <person name="White P.S."/>
            <person name="Williams A.L."/>
            <person name="Wills P.L."/>
            <person name="Wu J.-R."/>
            <person name="Wu K."/>
            <person name="Yang J."/>
            <person name="DeJong P."/>
            <person name="Bruce D."/>
            <person name="Doggett N.A."/>
            <person name="Deaven L."/>
            <person name="Schmutz J."/>
            <person name="Grimwood J."/>
            <person name="Richardson P."/>
            <person name="Rokhsar D.S."/>
            <person name="Eichler E.E."/>
            <person name="Gilna P."/>
            <person name="Lucas S.M."/>
            <person name="Myers R.M."/>
            <person name="Rubin E.M."/>
            <person name="Pennacchio L.A."/>
        </authorList>
    </citation>
    <scope>NUCLEOTIDE SEQUENCE [LARGE SCALE GENOMIC DNA]</scope>
</reference>
<reference key="4">
    <citation type="submission" date="2005-07" db="EMBL/GenBank/DDBJ databases">
        <authorList>
            <person name="Mural R.J."/>
            <person name="Istrail S."/>
            <person name="Sutton G.G."/>
            <person name="Florea L."/>
            <person name="Halpern A.L."/>
            <person name="Mobarry C.M."/>
            <person name="Lippert R."/>
            <person name="Walenz B."/>
            <person name="Shatkay H."/>
            <person name="Dew I."/>
            <person name="Miller J.R."/>
            <person name="Flanigan M.J."/>
            <person name="Edwards N.J."/>
            <person name="Bolanos R."/>
            <person name="Fasulo D."/>
            <person name="Halldorsson B.V."/>
            <person name="Hannenhalli S."/>
            <person name="Turner R."/>
            <person name="Yooseph S."/>
            <person name="Lu F."/>
            <person name="Nusskern D.R."/>
            <person name="Shue B.C."/>
            <person name="Zheng X.H."/>
            <person name="Zhong F."/>
            <person name="Delcher A.L."/>
            <person name="Huson D.H."/>
            <person name="Kravitz S.A."/>
            <person name="Mouchard L."/>
            <person name="Reinert K."/>
            <person name="Remington K.A."/>
            <person name="Clark A.G."/>
            <person name="Waterman M.S."/>
            <person name="Eichler E.E."/>
            <person name="Adams M.D."/>
            <person name="Hunkapiller M.W."/>
            <person name="Myers E.W."/>
            <person name="Venter J.C."/>
        </authorList>
    </citation>
    <scope>NUCLEOTIDE SEQUENCE [LARGE SCALE GENOMIC DNA]</scope>
</reference>
<reference key="5">
    <citation type="journal article" date="2004" name="Genome Res.">
        <title>The status, quality, and expansion of the NIH full-length cDNA project: the Mammalian Gene Collection (MGC).</title>
        <authorList>
            <consortium name="The MGC Project Team"/>
        </authorList>
    </citation>
    <scope>NUCLEOTIDE SEQUENCE [LARGE SCALE MRNA] (ISOFORM 1)</scope>
    <source>
        <tissue>Skin</tissue>
    </source>
</reference>
<organism>
    <name type="scientific">Homo sapiens</name>
    <name type="common">Human</name>
    <dbReference type="NCBI Taxonomy" id="9606"/>
    <lineage>
        <taxon>Eukaryota</taxon>
        <taxon>Metazoa</taxon>
        <taxon>Chordata</taxon>
        <taxon>Craniata</taxon>
        <taxon>Vertebrata</taxon>
        <taxon>Euteleostomi</taxon>
        <taxon>Mammalia</taxon>
        <taxon>Eutheria</taxon>
        <taxon>Euarchontoglires</taxon>
        <taxon>Primates</taxon>
        <taxon>Haplorrhini</taxon>
        <taxon>Catarrhini</taxon>
        <taxon>Hominidae</taxon>
        <taxon>Homo</taxon>
    </lineage>
</organism>
<sequence>MTDPSLGLTVPMAPPLAPLPPRDPNGAGSEWRKPGAVSFADVAVYFSREEWGCLRPAQRALYRDVMRETYGHLGALGVGGSKPALISWVEEKAELWDPAAQDPEVAKCPTEADPDSRNKEEERQREGTGALEKPDPVAAGSPGLKAPQAPFAGLEQLSKARRRSRPRFFAHPPVPRADQRHGCYVCGKSFAWRSTLVEHIYSHRGEKPFHCADCGKGFGHASSLSKHRAIHRGERPHRCPECGRAFMRRTALTSHLRVHTGEKPYRCPQCGRCFGLKTGMAKHQWVHRPGGEGRRGRRPGGLSVTLTPVRGDLDPPVGFQLYPEIFQECG</sequence>
<gene>
    <name evidence="5" type="primary">ZNF747</name>
</gene>
<feature type="chain" id="PRO_0000293691" description="Zinc finger protein 747">
    <location>
        <begin position="1"/>
        <end position="330"/>
    </location>
</feature>
<feature type="domain" description="KRAB" evidence="2">
    <location>
        <begin position="37"/>
        <end position="108"/>
    </location>
</feature>
<feature type="zinc finger region" description="C2H2-type 1" evidence="1">
    <location>
        <begin position="181"/>
        <end position="203"/>
    </location>
</feature>
<feature type="zinc finger region" description="C2H2-type 2" evidence="1">
    <location>
        <begin position="209"/>
        <end position="231"/>
    </location>
</feature>
<feature type="zinc finger region" description="C2H2-type 3" evidence="1">
    <location>
        <begin position="237"/>
        <end position="259"/>
    </location>
</feature>
<feature type="zinc finger region" description="C2H2-type 4" evidence="1">
    <location>
        <begin position="265"/>
        <end position="287"/>
    </location>
</feature>
<feature type="region of interest" description="Disordered" evidence="3">
    <location>
        <begin position="1"/>
        <end position="32"/>
    </location>
</feature>
<feature type="region of interest" description="Disordered" evidence="3">
    <location>
        <begin position="99"/>
        <end position="150"/>
    </location>
</feature>
<feature type="compositionally biased region" description="Pro residues" evidence="3">
    <location>
        <begin position="12"/>
        <end position="23"/>
    </location>
</feature>
<feature type="compositionally biased region" description="Basic and acidic residues" evidence="3">
    <location>
        <begin position="114"/>
        <end position="126"/>
    </location>
</feature>
<feature type="splice variant" id="VSP_061285" description="In isoform 1.">
    <original>VGGSKPALISWVEEKAELWDPAAQDPEVAKCPTEADPDSRNKEEERQREGTGALEKPDPVAAGSPGLKAPQAPFAGLEQLSKARRRSRPRFFAHPPVPRADQRHGCYVCGKSFAWRSTLVEHIYSHRGEKPFHCADCGKGFGHASSLSKHRAIHRGERPHRCPECGRAFMRRTALTSHLRVHTGEKPYRCPQCGRCFGLKTGMAKHQWVHRPGGEGRRGRRPGGLSVTLTPVRGDLDPPVGFQLYPEIFQEC</original>
    <variation>ESPTCLPGPCASTGPAAPLGAACGVGGPGAGQAASSQRGVCVLLPQESEAASRRSSPGWRRRPNCGIRLPRIRRWRSVRQKRTQQIPETRKRKDKGKGREPWRSPTLWPPGLL</variation>
    <location>
        <begin position="78"/>
        <end position="329"/>
    </location>
</feature>
<feature type="splice variant" id="VSP_061286" description="In isoform 2.">
    <original>VGGSKPALISWVEEKAELWDPAAQDPEVAKCPTEADPDSRNKEEERQREGTGALEKPDPVAAGSPGLKAPQAPFAGLEQLSKARRRSRPRFFAHPPVPRADQRHGCYVCGKSFAWRSTLVEHIYSHRGEKPFHCADCGKGFGHASSLSKHRAIHRGERPHRCPECGRAFMRRTALTSHLRVHTGEKPYRCPQCGRCFGLKTGMAKHQWVHRPGGEGRRGRRPGGLSVTLTPVRGDLDPPVGFQLYPEIFQEC</original>
    <variation>ESPTCLPGPCASTGPAAPLGAACGVGGPGAGQAASSQRGVCVLLPQESEAASRRSSPGWRRRPNCGIRLPRIRRWRSVRQKRTQIPETRKRKDKGKGREPWRSPTLWPPGLL</variation>
    <location>
        <begin position="78"/>
        <end position="329"/>
    </location>
</feature>
<feature type="sequence conflict" description="In Ref. 1; BAB70760." evidence="4" ref="1">
    <original>A</original>
    <variation>V</variation>
    <location>
        <position position="27"/>
    </location>
</feature>
<name>ZN747_HUMAN</name>
<accession>Q9BV97</accession>
<accession>A8K827</accession>
<accession>B7WNU3</accession>
<accession>B7Z5R0</accession>
<accession>Q59FB4</accession>
<accession>Q96NW0</accession>
<proteinExistence type="evidence at protein level"/>
<evidence type="ECO:0000255" key="1">
    <source>
        <dbReference type="PROSITE-ProRule" id="PRU00042"/>
    </source>
</evidence>
<evidence type="ECO:0000255" key="2">
    <source>
        <dbReference type="PROSITE-ProRule" id="PRU00119"/>
    </source>
</evidence>
<evidence type="ECO:0000256" key="3">
    <source>
        <dbReference type="SAM" id="MobiDB-lite"/>
    </source>
</evidence>
<evidence type="ECO:0000305" key="4"/>
<evidence type="ECO:0000312" key="5">
    <source>
        <dbReference type="HGNC" id="HGNC:28350"/>
    </source>
</evidence>
<comment type="interaction">
    <interactant intactId="EBI-4395497">
        <id>Q9BV97</id>
    </interactant>
    <interactant intactId="EBI-743771">
        <id>Q92624</id>
        <label>APPBP2</label>
    </interactant>
    <organismsDiffer>false</organismsDiffer>
    <experiments>3</experiments>
</comment>
<comment type="interaction">
    <interactant intactId="EBI-4395497">
        <id>Q9BV97</id>
    </interactant>
    <interactant intactId="EBI-6509505">
        <id>Q0VD86</id>
        <label>INCA1</label>
    </interactant>
    <organismsDiffer>false</organismsDiffer>
    <experiments>3</experiments>
</comment>
<comment type="interaction">
    <interactant intactId="EBI-4395497">
        <id>Q9BV97</id>
    </interactant>
    <interactant intactId="EBI-740595">
        <id>Q9UMX1</id>
        <label>SUFU</label>
    </interactant>
    <organismsDiffer>false</organismsDiffer>
    <experiments>8</experiments>
</comment>
<comment type="alternative products">
    <event type="alternative splicing"/>
    <isoform>
        <id>Q9BV97-3</id>
        <name>3</name>
        <sequence type="displayed"/>
    </isoform>
    <isoform>
        <id>Q9BV97-1</id>
        <name>1</name>
        <sequence type="described" ref="VSP_061285"/>
    </isoform>
    <isoform>
        <id>Q9BV97-2</id>
        <name>2</name>
        <sequence type="described" ref="VSP_061286"/>
    </isoform>
</comment>
<comment type="sequence caution" evidence="4">
    <conflict type="erroneous termination">
        <sequence resource="EMBL-CDS" id="BAB70760"/>
    </conflict>
    <text>Truncated C-terminus.</text>
</comment>
<comment type="sequence caution" evidence="4">
    <conflict type="erroneous initiation">
        <sequence resource="EMBL-CDS" id="BAD92783"/>
    </conflict>
    <text>Extended N-terminus.</text>
</comment>
<protein>
    <recommendedName>
        <fullName evidence="5">Zinc finger protein 747</fullName>
    </recommendedName>
</protein>